<protein>
    <recommendedName>
        <fullName>Uncharacterized protein C4orf51 homolog</fullName>
    </recommendedName>
</protein>
<reference key="1">
    <citation type="journal article" date="2004" name="Genome Res.">
        <title>The status, quality, and expansion of the NIH full-length cDNA project: the Mammalian Gene Collection (MGC).</title>
        <authorList>
            <consortium name="The MGC Project Team"/>
        </authorList>
    </citation>
    <scope>NUCLEOTIDE SEQUENCE [LARGE SCALE MRNA]</scope>
    <source>
        <tissue>Testis</tissue>
    </source>
</reference>
<proteinExistence type="evidence at transcript level"/>
<evidence type="ECO:0000256" key="1">
    <source>
        <dbReference type="SAM" id="MobiDB-lite"/>
    </source>
</evidence>
<organism>
    <name type="scientific">Rattus norvegicus</name>
    <name type="common">Rat</name>
    <dbReference type="NCBI Taxonomy" id="10116"/>
    <lineage>
        <taxon>Eukaryota</taxon>
        <taxon>Metazoa</taxon>
        <taxon>Chordata</taxon>
        <taxon>Craniata</taxon>
        <taxon>Vertebrata</taxon>
        <taxon>Euteleostomi</taxon>
        <taxon>Mammalia</taxon>
        <taxon>Eutheria</taxon>
        <taxon>Euarchontoglires</taxon>
        <taxon>Glires</taxon>
        <taxon>Rodentia</taxon>
        <taxon>Myomorpha</taxon>
        <taxon>Muroidea</taxon>
        <taxon>Muridae</taxon>
        <taxon>Murinae</taxon>
        <taxon>Rattus</taxon>
    </lineage>
</organism>
<sequence>MSHFLYLAPEIQLPFSPLTSTEFELIRRKARELWQNEARWSTSSVTTYSGSYREKQLDEASCHRLAQRFGQPHFEYKPAPLPGGSAYNALPGQAGSQEAADGKGRLPDITSPSQDSTLNIKHKVAHQSWSSGTSRPTCLAYRPRHLSPSSKPKRPGFELLMSYRNRGRKLLRQLQRQWDYENKLGSSDDSDTDRFSSVTSGSSRRKFK</sequence>
<keyword id="KW-1185">Reference proteome</keyword>
<dbReference type="EMBL" id="BC098038">
    <property type="protein sequence ID" value="AAH98038.1"/>
    <property type="molecule type" value="mRNA"/>
</dbReference>
<dbReference type="RefSeq" id="NP_001020935.1">
    <property type="nucleotide sequence ID" value="NM_001025764.2"/>
</dbReference>
<dbReference type="SMR" id="Q4V7B2"/>
<dbReference type="PhosphoSitePlus" id="Q4V7B2"/>
<dbReference type="PaxDb" id="10116-ENSRNOP00000015541"/>
<dbReference type="Ensembl" id="ENSRNOT00000015541.5">
    <property type="protein sequence ID" value="ENSRNOP00000015541.4"/>
    <property type="gene ID" value="ENSRNOG00000011671.5"/>
</dbReference>
<dbReference type="GeneID" id="498933"/>
<dbReference type="KEGG" id="rno:498933"/>
<dbReference type="UCSC" id="RGD:1561806">
    <property type="organism name" value="rat"/>
</dbReference>
<dbReference type="AGR" id="RGD:1561806"/>
<dbReference type="CTD" id="498933"/>
<dbReference type="RGD" id="1561806">
    <property type="gene designation" value="C19h4orf51"/>
</dbReference>
<dbReference type="eggNOG" id="ENOG502T40P">
    <property type="taxonomic scope" value="Eukaryota"/>
</dbReference>
<dbReference type="GeneTree" id="ENSGT00520000060562"/>
<dbReference type="HOGENOM" id="CLU_116990_0_0_1"/>
<dbReference type="InParanoid" id="Q4V7B2"/>
<dbReference type="OMA" id="WDSESKV"/>
<dbReference type="OrthoDB" id="9972253at2759"/>
<dbReference type="PhylomeDB" id="Q4V7B2"/>
<dbReference type="PRO" id="PR:Q4V7B2"/>
<dbReference type="Proteomes" id="UP000002494">
    <property type="component" value="Chromosome 19"/>
</dbReference>
<dbReference type="Bgee" id="ENSRNOG00000011671">
    <property type="expression patterns" value="Expressed in testis"/>
</dbReference>
<dbReference type="InterPro" id="IPR031708">
    <property type="entry name" value="DUF4722"/>
</dbReference>
<dbReference type="Pfam" id="PF15849">
    <property type="entry name" value="DUF4722"/>
    <property type="match status" value="1"/>
</dbReference>
<feature type="chain" id="PRO_0000392540" description="Uncharacterized protein C4orf51 homolog">
    <location>
        <begin position="1"/>
        <end position="208"/>
    </location>
</feature>
<feature type="region of interest" description="Disordered" evidence="1">
    <location>
        <begin position="91"/>
        <end position="115"/>
    </location>
</feature>
<feature type="region of interest" description="Disordered" evidence="1">
    <location>
        <begin position="127"/>
        <end position="156"/>
    </location>
</feature>
<feature type="region of interest" description="Disordered" evidence="1">
    <location>
        <begin position="182"/>
        <end position="208"/>
    </location>
</feature>
<feature type="compositionally biased region" description="Polar residues" evidence="1">
    <location>
        <begin position="127"/>
        <end position="136"/>
    </location>
</feature>
<accession>Q4V7B2</accession>
<name>CD051_RAT</name>